<evidence type="ECO:0000250" key="1"/>
<evidence type="ECO:0000305" key="2"/>
<keyword id="KW-0963">Cytoplasm</keyword>
<keyword id="KW-0285">Flavoprotein</keyword>
<keyword id="KW-0288">FMN</keyword>
<keyword id="KW-0560">Oxidoreductase</keyword>
<keyword id="KW-0665">Pyrimidine biosynthesis</keyword>
<feature type="chain" id="PRO_1000100231" description="Putative dihydroorotate dehydrogenase A (fumarate)">
    <location>
        <begin position="1"/>
        <end position="311"/>
    </location>
</feature>
<feature type="active site" description="Nucleophile">
    <location>
        <position position="131"/>
    </location>
</feature>
<feature type="binding site" evidence="1">
    <location>
        <begin position="45"/>
        <end position="46"/>
    </location>
    <ligand>
        <name>FMN</name>
        <dbReference type="ChEBI" id="CHEBI:58210"/>
    </ligand>
</feature>
<feature type="binding site" evidence="1">
    <location>
        <position position="45"/>
    </location>
    <ligand>
        <name>substrate</name>
    </ligand>
</feature>
<feature type="binding site" evidence="1">
    <location>
        <begin position="69"/>
        <end position="73"/>
    </location>
    <ligand>
        <name>substrate</name>
    </ligand>
</feature>
<feature type="binding site" evidence="1">
    <location>
        <position position="128"/>
    </location>
    <ligand>
        <name>FMN</name>
        <dbReference type="ChEBI" id="CHEBI:58210"/>
    </ligand>
</feature>
<feature type="binding site" evidence="1">
    <location>
        <position position="128"/>
    </location>
    <ligand>
        <name>substrate</name>
    </ligand>
</feature>
<feature type="binding site" evidence="1">
    <location>
        <position position="165"/>
    </location>
    <ligand>
        <name>FMN</name>
        <dbReference type="ChEBI" id="CHEBI:58210"/>
    </ligand>
</feature>
<feature type="binding site" evidence="1">
    <location>
        <position position="193"/>
    </location>
    <ligand>
        <name>FMN</name>
        <dbReference type="ChEBI" id="CHEBI:58210"/>
    </ligand>
</feature>
<feature type="binding site" evidence="1">
    <location>
        <begin position="194"/>
        <end position="195"/>
    </location>
    <ligand>
        <name>substrate</name>
    </ligand>
</feature>
<feature type="binding site" evidence="1">
    <location>
        <position position="220"/>
    </location>
    <ligand>
        <name>FMN</name>
        <dbReference type="ChEBI" id="CHEBI:58210"/>
    </ligand>
</feature>
<feature type="binding site" evidence="1">
    <location>
        <begin position="248"/>
        <end position="249"/>
    </location>
    <ligand>
        <name>FMN</name>
        <dbReference type="ChEBI" id="CHEBI:58210"/>
    </ligand>
</feature>
<feature type="binding site" evidence="1">
    <location>
        <begin position="270"/>
        <end position="271"/>
    </location>
    <ligand>
        <name>FMN</name>
        <dbReference type="ChEBI" id="CHEBI:58210"/>
    </ligand>
</feature>
<accession>P0DD66</accession>
<accession>Q79XJ9</accession>
<accession>Q8K6X4</accession>
<sequence length="311" mass="34365">MVSTATQIGHFSFDNCLMNAAGVYCMTKEELMEVEKSQAASFVTKTGTLEVRPGNPEPRYADTRLGSINSMGLPNNGFRYYLDFVSDLAKTGQHKPHFLSVVGLSPTETETILKVIMASDYEGLVELNLSCPNVPGKPQIAYDFETTDQLLENIFTYYTKPLGIKLPPYFDIVHFDQAAAIFNKYPLSFVNCVNSIGNGLVIEDEQVLIKPKNGFGGIGGDYIKPTALANVHAFYKRLKPSIHIIGTGGIKTGRDAFEHILCGASMVQIGTALHQEGPAIFERVTKELKTIMVEKGYQSLDDFRGNLRYKD</sequence>
<protein>
    <recommendedName>
        <fullName>Putative dihydroorotate dehydrogenase A (fumarate)</fullName>
        <shortName>DHOD A</shortName>
        <shortName>DHODase A</shortName>
        <shortName>DHOdehase A</shortName>
        <ecNumber>1.3.98.1</ecNumber>
    </recommendedName>
</protein>
<organism>
    <name type="scientific">Streptococcus pyogenes serotype M3 (strain ATCC BAA-595 / MGAS315)</name>
    <dbReference type="NCBI Taxonomy" id="198466"/>
    <lineage>
        <taxon>Bacteria</taxon>
        <taxon>Bacillati</taxon>
        <taxon>Bacillota</taxon>
        <taxon>Bacilli</taxon>
        <taxon>Lactobacillales</taxon>
        <taxon>Streptococcaceae</taxon>
        <taxon>Streptococcus</taxon>
    </lineage>
</organism>
<reference key="1">
    <citation type="journal article" date="2002" name="Proc. Natl. Acad. Sci. U.S.A.">
        <title>Genome sequence of a serotype M3 strain of group A Streptococcus: phage-encoded toxins, the high-virulence phenotype, and clone emergence.</title>
        <authorList>
            <person name="Beres S.B."/>
            <person name="Sylva G.L."/>
            <person name="Barbian K.D."/>
            <person name="Lei B."/>
            <person name="Hoff J.S."/>
            <person name="Mammarella N.D."/>
            <person name="Liu M.-Y."/>
            <person name="Smoot J.C."/>
            <person name="Porcella S.F."/>
            <person name="Parkins L.D."/>
            <person name="Campbell D.S."/>
            <person name="Smith T.M."/>
            <person name="McCormick J.K."/>
            <person name="Leung D.Y.M."/>
            <person name="Schlievert P.M."/>
            <person name="Musser J.M."/>
        </authorList>
    </citation>
    <scope>NUCLEOTIDE SEQUENCE [LARGE SCALE GENOMIC DNA]</scope>
    <source>
        <strain>ATCC BAA-595 / MGAS315</strain>
    </source>
</reference>
<comment type="function">
    <text evidence="1">Catalyzes the conversion of dihydroorotate to orotate with fumarate as the electron acceptor.</text>
</comment>
<comment type="catalytic activity">
    <reaction>
        <text>(S)-dihydroorotate + fumarate = orotate + succinate</text>
        <dbReference type="Rhea" id="RHEA:30059"/>
        <dbReference type="ChEBI" id="CHEBI:29806"/>
        <dbReference type="ChEBI" id="CHEBI:30031"/>
        <dbReference type="ChEBI" id="CHEBI:30839"/>
        <dbReference type="ChEBI" id="CHEBI:30864"/>
        <dbReference type="EC" id="1.3.98.1"/>
    </reaction>
</comment>
<comment type="cofactor">
    <cofactor evidence="1">
        <name>FMN</name>
        <dbReference type="ChEBI" id="CHEBI:58210"/>
    </cofactor>
    <text evidence="1">Binds 1 FMN per subunit.</text>
</comment>
<comment type="pathway">
    <text>Pyrimidine metabolism; UMP biosynthesis via de novo pathway.</text>
</comment>
<comment type="subunit">
    <text evidence="1">Homodimer.</text>
</comment>
<comment type="subcellular location">
    <subcellularLocation>
        <location evidence="1">Cytoplasm</location>
    </subcellularLocation>
</comment>
<comment type="similarity">
    <text evidence="2">Belongs to the dihydroorotate dehydrogenase family. Type 1 subfamily.</text>
</comment>
<proteinExistence type="inferred from homology"/>
<name>PYRDA_STRP3</name>
<gene>
    <name type="primary">pyrD</name>
    <name type="ordered locus">SpyM3_1091</name>
</gene>
<dbReference type="EC" id="1.3.98.1"/>
<dbReference type="EMBL" id="AE014074">
    <property type="protein sequence ID" value="AAM79698.1"/>
    <property type="molecule type" value="Genomic_DNA"/>
</dbReference>
<dbReference type="RefSeq" id="WP_011054669.1">
    <property type="nucleotide sequence ID" value="NC_004070.1"/>
</dbReference>
<dbReference type="SMR" id="P0DD66"/>
<dbReference type="KEGG" id="spg:SpyM3_1091"/>
<dbReference type="HOGENOM" id="CLU_042042_3_0_9"/>
<dbReference type="UniPathway" id="UPA00070"/>
<dbReference type="Proteomes" id="UP000000564">
    <property type="component" value="Chromosome"/>
</dbReference>
<dbReference type="GO" id="GO:0005737">
    <property type="term" value="C:cytoplasm"/>
    <property type="evidence" value="ECO:0007669"/>
    <property type="project" value="UniProtKB-SubCell"/>
</dbReference>
<dbReference type="GO" id="GO:1990663">
    <property type="term" value="F:dihydroorotate dehydrogenase (fumarate) activity"/>
    <property type="evidence" value="ECO:0007669"/>
    <property type="project" value="UniProtKB-EC"/>
</dbReference>
<dbReference type="GO" id="GO:0006207">
    <property type="term" value="P:'de novo' pyrimidine nucleobase biosynthetic process"/>
    <property type="evidence" value="ECO:0007669"/>
    <property type="project" value="InterPro"/>
</dbReference>
<dbReference type="GO" id="GO:0044205">
    <property type="term" value="P:'de novo' UMP biosynthetic process"/>
    <property type="evidence" value="ECO:0007669"/>
    <property type="project" value="UniProtKB-UniRule"/>
</dbReference>
<dbReference type="CDD" id="cd04741">
    <property type="entry name" value="DHOD_1A_like"/>
    <property type="match status" value="1"/>
</dbReference>
<dbReference type="FunFam" id="3.20.20.70:FF:000027">
    <property type="entry name" value="Dihydropyrimidine dehydrogenase [NADP(+)]"/>
    <property type="match status" value="1"/>
</dbReference>
<dbReference type="Gene3D" id="3.20.20.70">
    <property type="entry name" value="Aldolase class I"/>
    <property type="match status" value="1"/>
</dbReference>
<dbReference type="HAMAP" id="MF_00224">
    <property type="entry name" value="DHO_dh_type1"/>
    <property type="match status" value="1"/>
</dbReference>
<dbReference type="InterPro" id="IPR013785">
    <property type="entry name" value="Aldolase_TIM"/>
</dbReference>
<dbReference type="InterPro" id="IPR050074">
    <property type="entry name" value="DHO_dehydrogenase"/>
</dbReference>
<dbReference type="InterPro" id="IPR033886">
    <property type="entry name" value="DHOD_1A"/>
</dbReference>
<dbReference type="InterPro" id="IPR024920">
    <property type="entry name" value="Dihydroorotate_DH_1"/>
</dbReference>
<dbReference type="InterPro" id="IPR012135">
    <property type="entry name" value="Dihydroorotate_DH_1_2"/>
</dbReference>
<dbReference type="InterPro" id="IPR005720">
    <property type="entry name" value="Dihydroorotate_DH_cat"/>
</dbReference>
<dbReference type="InterPro" id="IPR001295">
    <property type="entry name" value="Dihydroorotate_DH_CS"/>
</dbReference>
<dbReference type="NCBIfam" id="NF002702">
    <property type="entry name" value="PRK02506.1"/>
    <property type="match status" value="1"/>
</dbReference>
<dbReference type="PANTHER" id="PTHR48109:SF1">
    <property type="entry name" value="DIHYDROOROTATE DEHYDROGENASE (FUMARATE)"/>
    <property type="match status" value="1"/>
</dbReference>
<dbReference type="PANTHER" id="PTHR48109">
    <property type="entry name" value="DIHYDROOROTATE DEHYDROGENASE (QUINONE), MITOCHONDRIAL-RELATED"/>
    <property type="match status" value="1"/>
</dbReference>
<dbReference type="Pfam" id="PF01180">
    <property type="entry name" value="DHO_dh"/>
    <property type="match status" value="1"/>
</dbReference>
<dbReference type="PIRSF" id="PIRSF000164">
    <property type="entry name" value="DHO_oxidase"/>
    <property type="match status" value="1"/>
</dbReference>
<dbReference type="SUPFAM" id="SSF51395">
    <property type="entry name" value="FMN-linked oxidoreductases"/>
    <property type="match status" value="1"/>
</dbReference>
<dbReference type="PROSITE" id="PS00912">
    <property type="entry name" value="DHODEHASE_2"/>
    <property type="match status" value="1"/>
</dbReference>